<accession>P85759</accession>
<reference evidence="5" key="1">
    <citation type="journal article" date="2009" name="BMC Evol. Biol.">
        <title>A proteomic approach for studying insect phylogeny: CAPA peptides of ancient insect taxa (Dictyoptera, Blattoptera) as a test case.</title>
        <authorList>
            <person name="Roth S."/>
            <person name="Fromm B."/>
            <person name="Gaede G."/>
            <person name="Predel R."/>
        </authorList>
    </citation>
    <scope>PROTEIN SEQUENCE</scope>
    <scope>AMIDATION AT LEU-17</scope>
    <source>
        <tissue evidence="3">Abdominal perisympathetic organs</tissue>
    </source>
</reference>
<name>PPK5_PSEFO</name>
<organism>
    <name type="scientific">Pseudoderopeltis foveolata</name>
    <name type="common">Cockroach</name>
    <dbReference type="NCBI Taxonomy" id="303879"/>
    <lineage>
        <taxon>Eukaryota</taxon>
        <taxon>Metazoa</taxon>
        <taxon>Ecdysozoa</taxon>
        <taxon>Arthropoda</taxon>
        <taxon>Hexapoda</taxon>
        <taxon>Insecta</taxon>
        <taxon>Pterygota</taxon>
        <taxon>Neoptera</taxon>
        <taxon>Polyneoptera</taxon>
        <taxon>Dictyoptera</taxon>
        <taxon>Blattodea</taxon>
        <taxon>Blattoidea</taxon>
        <taxon>Blattidae</taxon>
        <taxon>Blattinae</taxon>
        <taxon>Pseudoderopeltis</taxon>
    </lineage>
</organism>
<proteinExistence type="evidence at protein level"/>
<dbReference type="GO" id="GO:0005576">
    <property type="term" value="C:extracellular region"/>
    <property type="evidence" value="ECO:0007669"/>
    <property type="project" value="UniProtKB-SubCell"/>
</dbReference>
<dbReference type="GO" id="GO:0005184">
    <property type="term" value="F:neuropeptide hormone activity"/>
    <property type="evidence" value="ECO:0007669"/>
    <property type="project" value="InterPro"/>
</dbReference>
<dbReference type="GO" id="GO:0007218">
    <property type="term" value="P:neuropeptide signaling pathway"/>
    <property type="evidence" value="ECO:0007669"/>
    <property type="project" value="UniProtKB-KW"/>
</dbReference>
<dbReference type="InterPro" id="IPR001484">
    <property type="entry name" value="Pyrokinin_CS"/>
</dbReference>
<dbReference type="PROSITE" id="PS00539">
    <property type="entry name" value="PYROKININ"/>
    <property type="match status" value="1"/>
</dbReference>
<keyword id="KW-0027">Amidation</keyword>
<keyword id="KW-0903">Direct protein sequencing</keyword>
<keyword id="KW-0527">Neuropeptide</keyword>
<keyword id="KW-0964">Secreted</keyword>
<protein>
    <recommendedName>
        <fullName evidence="1">Pyrokinin-5</fullName>
    </recommendedName>
    <alternativeName>
        <fullName evidence="1">FXPRL-amide</fullName>
    </alternativeName>
    <alternativeName>
        <fullName evidence="4">PseFo-Capa-PK</fullName>
    </alternativeName>
</protein>
<comment type="function">
    <text evidence="1">Myoactive.</text>
</comment>
<comment type="subcellular location">
    <subcellularLocation>
        <location evidence="5">Secreted</location>
    </subcellularLocation>
</comment>
<comment type="similarity">
    <text evidence="2">Belongs to the pyrokinin family.</text>
</comment>
<evidence type="ECO:0000250" key="1">
    <source>
        <dbReference type="UniProtKB" id="P82617"/>
    </source>
</evidence>
<evidence type="ECO:0000255" key="2"/>
<evidence type="ECO:0000269" key="3">
    <source>
    </source>
</evidence>
<evidence type="ECO:0000303" key="4">
    <source>
    </source>
</evidence>
<evidence type="ECO:0000305" key="5"/>
<feature type="peptide" id="PRO_0000378721" description="Pyrokinin-5" evidence="3">
    <location>
        <begin position="1"/>
        <end position="17"/>
    </location>
</feature>
<feature type="modified residue" description="Leucine amide" evidence="3">
    <location>
        <position position="17"/>
    </location>
</feature>
<sequence length="17" mass="1653">GGGGSGETSGMWFGPRL</sequence>